<sequence>MEAALAVTRLPPNDPRTPALSVVDMHTGGEPLRIVHAGCPEVAGPTLLAKRRYMRQHLDYIRRRLVFEPRGHRDMYGAILVPSELPDAHLGVLFLHNEGYSSMCGHAVLALGRFALDFGLVPAPPKGAREAQVNIHCPCGLVTAFVECEGGRSCGPVRFHSVPAFVLASDLTVDVPGHGKVLVDIAYGGAFYAFVSAEKLGLDVCSAKTRDLVDAASALTGAVKAQFKINHPESEDLGFLYGSILTDGKDAYSEEATTNICVFADEQVDRSPTGSGVTARIALQYHKGLLQLNQTRAFKSSATGSVFTGCAVREAKCGDFKAVIVEVAGQAHYTGTANLTVEDGDPLRDGFLLK</sequence>
<comment type="function">
    <text evidence="2">Catalyzes the dehydration of trans-3-hydroxy-L-proline to delta-1-pyrroline-2-carboxylate (Pyr2C).</text>
</comment>
<comment type="catalytic activity">
    <reaction evidence="2">
        <text>trans-3-hydroxy-L-proline = 1-pyrroline-2-carboxylate + H2O</text>
        <dbReference type="Rhea" id="RHEA:10320"/>
        <dbReference type="ChEBI" id="CHEBI:15377"/>
        <dbReference type="ChEBI" id="CHEBI:39785"/>
        <dbReference type="ChEBI" id="CHEBI:57938"/>
        <dbReference type="EC" id="4.2.1.77"/>
    </reaction>
</comment>
<comment type="subunit">
    <text evidence="1">Homodimer.</text>
</comment>
<comment type="miscellaneous">
    <text evidence="1">In contrast to the T.cruzi proline racemase enzyme, lacks the conserved Cys at position 273 which is replaced by a Thr residue, transforming the racemase activity into dehydratase activity.</text>
</comment>
<comment type="similarity">
    <text evidence="3">Belongs to the proline racemase family.</text>
</comment>
<accession>Q9CXA2</accession>
<accession>B8JJ82</accession>
<accession>Q99KB5</accession>
<proteinExistence type="evidence at protein level"/>
<protein>
    <recommendedName>
        <fullName>Trans-L-3-hydroxyproline dehydratase</fullName>
        <ecNumber>4.2.1.77</ecNumber>
    </recommendedName>
    <alternativeName>
        <fullName>Trans-3-hydroxy-L-proline dehydratase</fullName>
    </alternativeName>
</protein>
<name>T3HPD_MOUSE</name>
<reference key="1">
    <citation type="journal article" date="2005" name="Science">
        <title>The transcriptional landscape of the mammalian genome.</title>
        <authorList>
            <person name="Carninci P."/>
            <person name="Kasukawa T."/>
            <person name="Katayama S."/>
            <person name="Gough J."/>
            <person name="Frith M.C."/>
            <person name="Maeda N."/>
            <person name="Oyama R."/>
            <person name="Ravasi T."/>
            <person name="Lenhard B."/>
            <person name="Wells C."/>
            <person name="Kodzius R."/>
            <person name="Shimokawa K."/>
            <person name="Bajic V.B."/>
            <person name="Brenner S.E."/>
            <person name="Batalov S."/>
            <person name="Forrest A.R."/>
            <person name="Zavolan M."/>
            <person name="Davis M.J."/>
            <person name="Wilming L.G."/>
            <person name="Aidinis V."/>
            <person name="Allen J.E."/>
            <person name="Ambesi-Impiombato A."/>
            <person name="Apweiler R."/>
            <person name="Aturaliya R.N."/>
            <person name="Bailey T.L."/>
            <person name="Bansal M."/>
            <person name="Baxter L."/>
            <person name="Beisel K.W."/>
            <person name="Bersano T."/>
            <person name="Bono H."/>
            <person name="Chalk A.M."/>
            <person name="Chiu K.P."/>
            <person name="Choudhary V."/>
            <person name="Christoffels A."/>
            <person name="Clutterbuck D.R."/>
            <person name="Crowe M.L."/>
            <person name="Dalla E."/>
            <person name="Dalrymple B.P."/>
            <person name="de Bono B."/>
            <person name="Della Gatta G."/>
            <person name="di Bernardo D."/>
            <person name="Down T."/>
            <person name="Engstrom P."/>
            <person name="Fagiolini M."/>
            <person name="Faulkner G."/>
            <person name="Fletcher C.F."/>
            <person name="Fukushima T."/>
            <person name="Furuno M."/>
            <person name="Futaki S."/>
            <person name="Gariboldi M."/>
            <person name="Georgii-Hemming P."/>
            <person name="Gingeras T.R."/>
            <person name="Gojobori T."/>
            <person name="Green R.E."/>
            <person name="Gustincich S."/>
            <person name="Harbers M."/>
            <person name="Hayashi Y."/>
            <person name="Hensch T.K."/>
            <person name="Hirokawa N."/>
            <person name="Hill D."/>
            <person name="Huminiecki L."/>
            <person name="Iacono M."/>
            <person name="Ikeo K."/>
            <person name="Iwama A."/>
            <person name="Ishikawa T."/>
            <person name="Jakt M."/>
            <person name="Kanapin A."/>
            <person name="Katoh M."/>
            <person name="Kawasawa Y."/>
            <person name="Kelso J."/>
            <person name="Kitamura H."/>
            <person name="Kitano H."/>
            <person name="Kollias G."/>
            <person name="Krishnan S.P."/>
            <person name="Kruger A."/>
            <person name="Kummerfeld S.K."/>
            <person name="Kurochkin I.V."/>
            <person name="Lareau L.F."/>
            <person name="Lazarevic D."/>
            <person name="Lipovich L."/>
            <person name="Liu J."/>
            <person name="Liuni S."/>
            <person name="McWilliam S."/>
            <person name="Madan Babu M."/>
            <person name="Madera M."/>
            <person name="Marchionni L."/>
            <person name="Matsuda H."/>
            <person name="Matsuzawa S."/>
            <person name="Miki H."/>
            <person name="Mignone F."/>
            <person name="Miyake S."/>
            <person name="Morris K."/>
            <person name="Mottagui-Tabar S."/>
            <person name="Mulder N."/>
            <person name="Nakano N."/>
            <person name="Nakauchi H."/>
            <person name="Ng P."/>
            <person name="Nilsson R."/>
            <person name="Nishiguchi S."/>
            <person name="Nishikawa S."/>
            <person name="Nori F."/>
            <person name="Ohara O."/>
            <person name="Okazaki Y."/>
            <person name="Orlando V."/>
            <person name="Pang K.C."/>
            <person name="Pavan W.J."/>
            <person name="Pavesi G."/>
            <person name="Pesole G."/>
            <person name="Petrovsky N."/>
            <person name="Piazza S."/>
            <person name="Reed J."/>
            <person name="Reid J.F."/>
            <person name="Ring B.Z."/>
            <person name="Ringwald M."/>
            <person name="Rost B."/>
            <person name="Ruan Y."/>
            <person name="Salzberg S.L."/>
            <person name="Sandelin A."/>
            <person name="Schneider C."/>
            <person name="Schoenbach C."/>
            <person name="Sekiguchi K."/>
            <person name="Semple C.A."/>
            <person name="Seno S."/>
            <person name="Sessa L."/>
            <person name="Sheng Y."/>
            <person name="Shibata Y."/>
            <person name="Shimada H."/>
            <person name="Shimada K."/>
            <person name="Silva D."/>
            <person name="Sinclair B."/>
            <person name="Sperling S."/>
            <person name="Stupka E."/>
            <person name="Sugiura K."/>
            <person name="Sultana R."/>
            <person name="Takenaka Y."/>
            <person name="Taki K."/>
            <person name="Tammoja K."/>
            <person name="Tan S.L."/>
            <person name="Tang S."/>
            <person name="Taylor M.S."/>
            <person name="Tegner J."/>
            <person name="Teichmann S.A."/>
            <person name="Ueda H.R."/>
            <person name="van Nimwegen E."/>
            <person name="Verardo R."/>
            <person name="Wei C.L."/>
            <person name="Yagi K."/>
            <person name="Yamanishi H."/>
            <person name="Zabarovsky E."/>
            <person name="Zhu S."/>
            <person name="Zimmer A."/>
            <person name="Hide W."/>
            <person name="Bult C."/>
            <person name="Grimmond S.M."/>
            <person name="Teasdale R.D."/>
            <person name="Liu E.T."/>
            <person name="Brusic V."/>
            <person name="Quackenbush J."/>
            <person name="Wahlestedt C."/>
            <person name="Mattick J.S."/>
            <person name="Hume D.A."/>
            <person name="Kai C."/>
            <person name="Sasaki D."/>
            <person name="Tomaru Y."/>
            <person name="Fukuda S."/>
            <person name="Kanamori-Katayama M."/>
            <person name="Suzuki M."/>
            <person name="Aoki J."/>
            <person name="Arakawa T."/>
            <person name="Iida J."/>
            <person name="Imamura K."/>
            <person name="Itoh M."/>
            <person name="Kato T."/>
            <person name="Kawaji H."/>
            <person name="Kawagashira N."/>
            <person name="Kawashima T."/>
            <person name="Kojima M."/>
            <person name="Kondo S."/>
            <person name="Konno H."/>
            <person name="Nakano K."/>
            <person name="Ninomiya N."/>
            <person name="Nishio T."/>
            <person name="Okada M."/>
            <person name="Plessy C."/>
            <person name="Shibata K."/>
            <person name="Shiraki T."/>
            <person name="Suzuki S."/>
            <person name="Tagami M."/>
            <person name="Waki K."/>
            <person name="Watahiki A."/>
            <person name="Okamura-Oho Y."/>
            <person name="Suzuki H."/>
            <person name="Kawai J."/>
            <person name="Hayashizaki Y."/>
        </authorList>
    </citation>
    <scope>NUCLEOTIDE SEQUENCE [LARGE SCALE MRNA]</scope>
    <source>
        <strain>C57BL/6J</strain>
        <tissue>Lung</tissue>
    </source>
</reference>
<reference key="2">
    <citation type="journal article" date="2009" name="PLoS Biol.">
        <title>Lineage-specific biology revealed by a finished genome assembly of the mouse.</title>
        <authorList>
            <person name="Church D.M."/>
            <person name="Goodstadt L."/>
            <person name="Hillier L.W."/>
            <person name="Zody M.C."/>
            <person name="Goldstein S."/>
            <person name="She X."/>
            <person name="Bult C.J."/>
            <person name="Agarwala R."/>
            <person name="Cherry J.L."/>
            <person name="DiCuccio M."/>
            <person name="Hlavina W."/>
            <person name="Kapustin Y."/>
            <person name="Meric P."/>
            <person name="Maglott D."/>
            <person name="Birtle Z."/>
            <person name="Marques A.C."/>
            <person name="Graves T."/>
            <person name="Zhou S."/>
            <person name="Teague B."/>
            <person name="Potamousis K."/>
            <person name="Churas C."/>
            <person name="Place M."/>
            <person name="Herschleb J."/>
            <person name="Runnheim R."/>
            <person name="Forrest D."/>
            <person name="Amos-Landgraf J."/>
            <person name="Schwartz D.C."/>
            <person name="Cheng Z."/>
            <person name="Lindblad-Toh K."/>
            <person name="Eichler E.E."/>
            <person name="Ponting C.P."/>
        </authorList>
    </citation>
    <scope>NUCLEOTIDE SEQUENCE [LARGE SCALE GENOMIC DNA]</scope>
    <source>
        <strain>C57BL/6J</strain>
    </source>
</reference>
<reference key="3">
    <citation type="journal article" date="2004" name="Genome Res.">
        <title>The status, quality, and expansion of the NIH full-length cDNA project: the Mammalian Gene Collection (MGC).</title>
        <authorList>
            <consortium name="The MGC Project Team"/>
        </authorList>
    </citation>
    <scope>NUCLEOTIDE SEQUENCE [LARGE SCALE MRNA]</scope>
    <source>
        <strain>FVB/N</strain>
        <tissue>Mammary tumor</tissue>
    </source>
</reference>
<reference key="4">
    <citation type="journal article" date="2010" name="Cell">
        <title>A tissue-specific atlas of mouse protein phosphorylation and expression.</title>
        <authorList>
            <person name="Huttlin E.L."/>
            <person name="Jedrychowski M.P."/>
            <person name="Elias J.E."/>
            <person name="Goswami T."/>
            <person name="Rad R."/>
            <person name="Beausoleil S.A."/>
            <person name="Villen J."/>
            <person name="Haas W."/>
            <person name="Sowa M.E."/>
            <person name="Gygi S.P."/>
        </authorList>
    </citation>
    <scope>IDENTIFICATION BY MASS SPECTROMETRY [LARGE SCALE ANALYSIS]</scope>
    <source>
        <tissue>Brown adipose tissue</tissue>
        <tissue>Heart</tissue>
        <tissue>Kidney</tissue>
        <tissue>Liver</tissue>
        <tissue>Lung</tissue>
    </source>
</reference>
<reference key="5">
    <citation type="journal article" date="2012" name="J. Biol. Chem.">
        <title>Identification of a human trans-3-Hydroxy-L-proline dehydratase, the first characterized member of a novel family of proline racemase-like enzymes.</title>
        <authorList>
            <person name="Visser W.F."/>
            <person name="Verhoeven-Duif N.M."/>
            <person name="de Koning T.J."/>
        </authorList>
    </citation>
    <scope>FUNCTION</scope>
    <scope>CATALYTIC ACTIVITY</scope>
</reference>
<dbReference type="EC" id="4.2.1.77"/>
<dbReference type="EMBL" id="AK018449">
    <property type="protein sequence ID" value="BAB31217.1"/>
    <property type="molecule type" value="mRNA"/>
</dbReference>
<dbReference type="EMBL" id="CR974486">
    <property type="status" value="NOT_ANNOTATED_CDS"/>
    <property type="molecule type" value="Genomic_DNA"/>
</dbReference>
<dbReference type="EMBL" id="BC004753">
    <property type="protein sequence ID" value="AAH04753.1"/>
    <property type="molecule type" value="mRNA"/>
</dbReference>
<dbReference type="CCDS" id="CCDS25966.1"/>
<dbReference type="RefSeq" id="NP_080314.1">
    <property type="nucleotide sequence ID" value="NM_026038.2"/>
</dbReference>
<dbReference type="SMR" id="Q9CXA2"/>
<dbReference type="BioGRID" id="212023">
    <property type="interactions" value="1"/>
</dbReference>
<dbReference type="FunCoup" id="Q9CXA2">
    <property type="interactions" value="68"/>
</dbReference>
<dbReference type="STRING" id="10090.ENSMUSP00000019862"/>
<dbReference type="iPTMnet" id="Q9CXA2"/>
<dbReference type="PhosphoSitePlus" id="Q9CXA2"/>
<dbReference type="jPOST" id="Q9CXA2"/>
<dbReference type="PaxDb" id="10090-ENSMUSP00000019862"/>
<dbReference type="PeptideAtlas" id="Q9CXA2"/>
<dbReference type="ProteomicsDB" id="254639"/>
<dbReference type="Pumba" id="Q9CXA2"/>
<dbReference type="Antibodypedia" id="68443">
    <property type="antibodies" value="44 antibodies from 14 providers"/>
</dbReference>
<dbReference type="DNASU" id="67217"/>
<dbReference type="Ensembl" id="ENSMUST00000019862.3">
    <property type="protein sequence ID" value="ENSMUSP00000019862.3"/>
    <property type="gene ID" value="ENSMUSG00000019718.9"/>
</dbReference>
<dbReference type="GeneID" id="67217"/>
<dbReference type="KEGG" id="mmu:67217"/>
<dbReference type="UCSC" id="uc007nvd.1">
    <property type="organism name" value="mouse"/>
</dbReference>
<dbReference type="AGR" id="MGI:1914467"/>
<dbReference type="CTD" id="112849"/>
<dbReference type="MGI" id="MGI:1914467">
    <property type="gene designation" value="L3hypdh"/>
</dbReference>
<dbReference type="VEuPathDB" id="HostDB:ENSMUSG00000019718"/>
<dbReference type="eggNOG" id="ENOG502QRPF">
    <property type="taxonomic scope" value="Eukaryota"/>
</dbReference>
<dbReference type="GeneTree" id="ENSGT00390000002032"/>
<dbReference type="HOGENOM" id="CLU_036729_0_1_1"/>
<dbReference type="InParanoid" id="Q9CXA2"/>
<dbReference type="OMA" id="SHVLWTG"/>
<dbReference type="OrthoDB" id="6409228at2759"/>
<dbReference type="PhylomeDB" id="Q9CXA2"/>
<dbReference type="TreeFam" id="TF329167"/>
<dbReference type="BioGRID-ORCS" id="67217">
    <property type="hits" value="1 hit in 77 CRISPR screens"/>
</dbReference>
<dbReference type="ChiTaRS" id="L3hypdh">
    <property type="organism name" value="mouse"/>
</dbReference>
<dbReference type="PRO" id="PR:Q9CXA2"/>
<dbReference type="Proteomes" id="UP000000589">
    <property type="component" value="Chromosome 12"/>
</dbReference>
<dbReference type="RNAct" id="Q9CXA2">
    <property type="molecule type" value="protein"/>
</dbReference>
<dbReference type="Bgee" id="ENSMUSG00000019718">
    <property type="expression patterns" value="Expressed in metanephric proximal tubule and 181 other cell types or tissues"/>
</dbReference>
<dbReference type="GO" id="GO:0016836">
    <property type="term" value="F:hydro-lyase activity"/>
    <property type="evidence" value="ECO:0000314"/>
    <property type="project" value="UniProtKB"/>
</dbReference>
<dbReference type="GO" id="GO:0050346">
    <property type="term" value="F:trans-L-3-hydroxyproline dehydratase activity"/>
    <property type="evidence" value="ECO:0007669"/>
    <property type="project" value="UniProtKB-EC"/>
</dbReference>
<dbReference type="FunFam" id="3.10.310.10:FF:000007">
    <property type="entry name" value="Trans-L-3-hydroxyproline dehydratase"/>
    <property type="match status" value="1"/>
</dbReference>
<dbReference type="Gene3D" id="3.10.310.10">
    <property type="entry name" value="Diaminopimelate Epimerase, Chain A, domain 1"/>
    <property type="match status" value="2"/>
</dbReference>
<dbReference type="InterPro" id="IPR008794">
    <property type="entry name" value="Pro_racemase_fam"/>
</dbReference>
<dbReference type="PANTHER" id="PTHR33442">
    <property type="entry name" value="TRANS-3-HYDROXY-L-PROLINE DEHYDRATASE"/>
    <property type="match status" value="1"/>
</dbReference>
<dbReference type="PANTHER" id="PTHR33442:SF1">
    <property type="entry name" value="TRANS-3-HYDROXY-L-PROLINE DEHYDRATASE"/>
    <property type="match status" value="1"/>
</dbReference>
<dbReference type="Pfam" id="PF05544">
    <property type="entry name" value="Pro_racemase"/>
    <property type="match status" value="1"/>
</dbReference>
<dbReference type="PIRSF" id="PIRSF029792">
    <property type="entry name" value="Pro_racemase"/>
    <property type="match status" value="1"/>
</dbReference>
<dbReference type="SFLD" id="SFLDS00028">
    <property type="entry name" value="Proline_Racemase"/>
    <property type="match status" value="1"/>
</dbReference>
<dbReference type="SUPFAM" id="SSF54506">
    <property type="entry name" value="Diaminopimelate epimerase-like"/>
    <property type="match status" value="1"/>
</dbReference>
<evidence type="ECO:0000250" key="1"/>
<evidence type="ECO:0000269" key="2">
    <source>
    </source>
</evidence>
<evidence type="ECO:0000305" key="3"/>
<feature type="chain" id="PRO_0000288950" description="Trans-L-3-hydroxyproline dehydratase">
    <location>
        <begin position="1"/>
        <end position="354"/>
    </location>
</feature>
<feature type="active site" description="Proton acceptor" evidence="1">
    <location>
        <position position="104"/>
    </location>
</feature>
<feature type="binding site" evidence="1">
    <location>
        <begin position="105"/>
        <end position="106"/>
    </location>
    <ligand>
        <name>substrate</name>
    </ligand>
</feature>
<feature type="binding site" evidence="1">
    <location>
        <position position="269"/>
    </location>
    <ligand>
        <name>substrate</name>
    </ligand>
</feature>
<feature type="binding site" evidence="1">
    <location>
        <begin position="274"/>
        <end position="275"/>
    </location>
    <ligand>
        <name>substrate</name>
    </ligand>
</feature>
<feature type="sequence conflict" description="In Ref. 3; AAH04753." evidence="3" ref="3">
    <original>N</original>
    <variation>H</variation>
    <location>
        <position position="13"/>
    </location>
</feature>
<feature type="sequence conflict" description="In Ref. 3; AAH04753." evidence="3" ref="3">
    <original>P</original>
    <variation>S</variation>
    <location>
        <position position="15"/>
    </location>
</feature>
<feature type="sequence conflict" description="In Ref. 3; AAH04753." evidence="3" ref="3">
    <original>V</original>
    <variation>M</variation>
    <location>
        <position position="81"/>
    </location>
</feature>
<feature type="sequence conflict" description="In Ref. 3; AAH04753." evidence="3" ref="3">
    <original>K</original>
    <variation>E</variation>
    <location>
        <position position="126"/>
    </location>
</feature>
<keyword id="KW-0456">Lyase</keyword>
<keyword id="KW-1185">Reference proteome</keyword>
<organism>
    <name type="scientific">Mus musculus</name>
    <name type="common">Mouse</name>
    <dbReference type="NCBI Taxonomy" id="10090"/>
    <lineage>
        <taxon>Eukaryota</taxon>
        <taxon>Metazoa</taxon>
        <taxon>Chordata</taxon>
        <taxon>Craniata</taxon>
        <taxon>Vertebrata</taxon>
        <taxon>Euteleostomi</taxon>
        <taxon>Mammalia</taxon>
        <taxon>Eutheria</taxon>
        <taxon>Euarchontoglires</taxon>
        <taxon>Glires</taxon>
        <taxon>Rodentia</taxon>
        <taxon>Myomorpha</taxon>
        <taxon>Muroidea</taxon>
        <taxon>Muridae</taxon>
        <taxon>Murinae</taxon>
        <taxon>Mus</taxon>
        <taxon>Mus</taxon>
    </lineage>
</organism>
<gene>
    <name type="primary">L3hypdh</name>
</gene>